<name>RS13_PARP8</name>
<gene>
    <name evidence="1" type="primary">rpsM</name>
    <name type="ordered locus">Bphy_2816</name>
</gene>
<comment type="function">
    <text evidence="1">Located at the top of the head of the 30S subunit, it contacts several helices of the 16S rRNA. In the 70S ribosome it contacts the 23S rRNA (bridge B1a) and protein L5 of the 50S subunit (bridge B1b), connecting the 2 subunits; these bridges are implicated in subunit movement. Contacts the tRNAs in the A and P-sites.</text>
</comment>
<comment type="subunit">
    <text evidence="1">Part of the 30S ribosomal subunit. Forms a loose heterodimer with protein S19. Forms two bridges to the 50S subunit in the 70S ribosome.</text>
</comment>
<comment type="similarity">
    <text evidence="1">Belongs to the universal ribosomal protein uS13 family.</text>
</comment>
<organism>
    <name type="scientific">Paraburkholderia phymatum (strain DSM 17167 / CIP 108236 / LMG 21445 / STM815)</name>
    <name type="common">Burkholderia phymatum</name>
    <dbReference type="NCBI Taxonomy" id="391038"/>
    <lineage>
        <taxon>Bacteria</taxon>
        <taxon>Pseudomonadati</taxon>
        <taxon>Pseudomonadota</taxon>
        <taxon>Betaproteobacteria</taxon>
        <taxon>Burkholderiales</taxon>
        <taxon>Burkholderiaceae</taxon>
        <taxon>Paraburkholderia</taxon>
    </lineage>
</organism>
<sequence>MARIAGVNIPNHQHTEIGLTAIYGIGRTRSRDICVAAGVAFSKKVKDLTDADLEKLREEVGKFIVEGDLRRETTMNIKRLMDLGCYRGVRHRKGLPLRGQRTRTNARTRKGPRRAAQSLKK</sequence>
<feature type="chain" id="PRO_1000141233" description="Small ribosomal subunit protein uS13">
    <location>
        <begin position="1"/>
        <end position="121"/>
    </location>
</feature>
<feature type="region of interest" description="Disordered" evidence="2">
    <location>
        <begin position="94"/>
        <end position="121"/>
    </location>
</feature>
<protein>
    <recommendedName>
        <fullName evidence="1">Small ribosomal subunit protein uS13</fullName>
    </recommendedName>
    <alternativeName>
        <fullName evidence="3">30S ribosomal protein S13</fullName>
    </alternativeName>
</protein>
<evidence type="ECO:0000255" key="1">
    <source>
        <dbReference type="HAMAP-Rule" id="MF_01315"/>
    </source>
</evidence>
<evidence type="ECO:0000256" key="2">
    <source>
        <dbReference type="SAM" id="MobiDB-lite"/>
    </source>
</evidence>
<evidence type="ECO:0000305" key="3"/>
<accession>B2JI42</accession>
<keyword id="KW-1185">Reference proteome</keyword>
<keyword id="KW-0687">Ribonucleoprotein</keyword>
<keyword id="KW-0689">Ribosomal protein</keyword>
<keyword id="KW-0694">RNA-binding</keyword>
<keyword id="KW-0699">rRNA-binding</keyword>
<keyword id="KW-0820">tRNA-binding</keyword>
<dbReference type="EMBL" id="CP001043">
    <property type="protein sequence ID" value="ACC71988.1"/>
    <property type="molecule type" value="Genomic_DNA"/>
</dbReference>
<dbReference type="RefSeq" id="WP_008923332.1">
    <property type="nucleotide sequence ID" value="NZ_CADFGH010000028.1"/>
</dbReference>
<dbReference type="SMR" id="B2JI42"/>
<dbReference type="STRING" id="391038.Bphy_2816"/>
<dbReference type="KEGG" id="bph:Bphy_2816"/>
<dbReference type="eggNOG" id="COG0099">
    <property type="taxonomic scope" value="Bacteria"/>
</dbReference>
<dbReference type="HOGENOM" id="CLU_103849_1_2_4"/>
<dbReference type="OrthoDB" id="9803610at2"/>
<dbReference type="Proteomes" id="UP000001192">
    <property type="component" value="Chromosome 1"/>
</dbReference>
<dbReference type="GO" id="GO:0005829">
    <property type="term" value="C:cytosol"/>
    <property type="evidence" value="ECO:0007669"/>
    <property type="project" value="TreeGrafter"/>
</dbReference>
<dbReference type="GO" id="GO:0015935">
    <property type="term" value="C:small ribosomal subunit"/>
    <property type="evidence" value="ECO:0007669"/>
    <property type="project" value="TreeGrafter"/>
</dbReference>
<dbReference type="GO" id="GO:0019843">
    <property type="term" value="F:rRNA binding"/>
    <property type="evidence" value="ECO:0007669"/>
    <property type="project" value="UniProtKB-UniRule"/>
</dbReference>
<dbReference type="GO" id="GO:0003735">
    <property type="term" value="F:structural constituent of ribosome"/>
    <property type="evidence" value="ECO:0007669"/>
    <property type="project" value="InterPro"/>
</dbReference>
<dbReference type="GO" id="GO:0000049">
    <property type="term" value="F:tRNA binding"/>
    <property type="evidence" value="ECO:0007669"/>
    <property type="project" value="UniProtKB-UniRule"/>
</dbReference>
<dbReference type="GO" id="GO:0006412">
    <property type="term" value="P:translation"/>
    <property type="evidence" value="ECO:0007669"/>
    <property type="project" value="UniProtKB-UniRule"/>
</dbReference>
<dbReference type="FunFam" id="1.10.8.50:FF:000001">
    <property type="entry name" value="30S ribosomal protein S13"/>
    <property type="match status" value="1"/>
</dbReference>
<dbReference type="FunFam" id="4.10.910.10:FF:000001">
    <property type="entry name" value="30S ribosomal protein S13"/>
    <property type="match status" value="1"/>
</dbReference>
<dbReference type="Gene3D" id="1.10.8.50">
    <property type="match status" value="1"/>
</dbReference>
<dbReference type="Gene3D" id="4.10.910.10">
    <property type="entry name" value="30s ribosomal protein s13, domain 2"/>
    <property type="match status" value="1"/>
</dbReference>
<dbReference type="HAMAP" id="MF_01315">
    <property type="entry name" value="Ribosomal_uS13"/>
    <property type="match status" value="1"/>
</dbReference>
<dbReference type="InterPro" id="IPR027437">
    <property type="entry name" value="Rbsml_uS13_C"/>
</dbReference>
<dbReference type="InterPro" id="IPR001892">
    <property type="entry name" value="Ribosomal_uS13"/>
</dbReference>
<dbReference type="InterPro" id="IPR010979">
    <property type="entry name" value="Ribosomal_uS13-like_H2TH"/>
</dbReference>
<dbReference type="InterPro" id="IPR019980">
    <property type="entry name" value="Ribosomal_uS13_bac-type"/>
</dbReference>
<dbReference type="InterPro" id="IPR018269">
    <property type="entry name" value="Ribosomal_uS13_CS"/>
</dbReference>
<dbReference type="NCBIfam" id="TIGR03631">
    <property type="entry name" value="uS13_bact"/>
    <property type="match status" value="1"/>
</dbReference>
<dbReference type="PANTHER" id="PTHR10871">
    <property type="entry name" value="30S RIBOSOMAL PROTEIN S13/40S RIBOSOMAL PROTEIN S18"/>
    <property type="match status" value="1"/>
</dbReference>
<dbReference type="PANTHER" id="PTHR10871:SF1">
    <property type="entry name" value="SMALL RIBOSOMAL SUBUNIT PROTEIN US13M"/>
    <property type="match status" value="1"/>
</dbReference>
<dbReference type="Pfam" id="PF00416">
    <property type="entry name" value="Ribosomal_S13"/>
    <property type="match status" value="1"/>
</dbReference>
<dbReference type="PIRSF" id="PIRSF002134">
    <property type="entry name" value="Ribosomal_S13"/>
    <property type="match status" value="1"/>
</dbReference>
<dbReference type="SUPFAM" id="SSF46946">
    <property type="entry name" value="S13-like H2TH domain"/>
    <property type="match status" value="1"/>
</dbReference>
<dbReference type="PROSITE" id="PS00646">
    <property type="entry name" value="RIBOSOMAL_S13_1"/>
    <property type="match status" value="1"/>
</dbReference>
<dbReference type="PROSITE" id="PS50159">
    <property type="entry name" value="RIBOSOMAL_S13_2"/>
    <property type="match status" value="1"/>
</dbReference>
<proteinExistence type="inferred from homology"/>
<reference key="1">
    <citation type="journal article" date="2014" name="Stand. Genomic Sci.">
        <title>Complete genome sequence of Burkholderia phymatum STM815(T), a broad host range and efficient nitrogen-fixing symbiont of Mimosa species.</title>
        <authorList>
            <person name="Moulin L."/>
            <person name="Klonowska A."/>
            <person name="Caroline B."/>
            <person name="Booth K."/>
            <person name="Vriezen J.A."/>
            <person name="Melkonian R."/>
            <person name="James E.K."/>
            <person name="Young J.P."/>
            <person name="Bena G."/>
            <person name="Hauser L."/>
            <person name="Land M."/>
            <person name="Kyrpides N."/>
            <person name="Bruce D."/>
            <person name="Chain P."/>
            <person name="Copeland A."/>
            <person name="Pitluck S."/>
            <person name="Woyke T."/>
            <person name="Lizotte-Waniewski M."/>
            <person name="Bristow J."/>
            <person name="Riley M."/>
        </authorList>
    </citation>
    <scope>NUCLEOTIDE SEQUENCE [LARGE SCALE GENOMIC DNA]</scope>
    <source>
        <strain>DSM 17167 / CIP 108236 / LMG 21445 / STM815</strain>
    </source>
</reference>